<sequence length="351" mass="38595">MVPMDRLLQIVRRFEFLEARLSAGAAPAEIAALSREYAELKPVVVEISAYRTALEDLAEAEAMLSDPEMRALAEDEIPALRARIPGMEQALRLALLPKDAADARPAILEIRPGTGGEEAALFAGDLLRMYQRYAEGQGWRFELLDLAPSELGGIREATARVEGEGAFARLKYESGVHRVQRVPETEAQGRIHTSAATVAVLPEAEEVDLEIPAADIRIDTMRSSGAGGQHVNTTDSAVRITHLPTGIIVTSSEKSQHRNREIAMQVLRARLYDLERQRLADARSADRKAQVGSGDRSERIRTYNFPQGRMTDHRINLTLYALPQIMAGDLSEVISALTAHDQAARLAEMEA</sequence>
<comment type="function">
    <text evidence="1">Peptide chain release factor 1 directs the termination of translation in response to the peptide chain termination codons UAG and UAA.</text>
</comment>
<comment type="subcellular location">
    <subcellularLocation>
        <location evidence="1">Cytoplasm</location>
    </subcellularLocation>
</comment>
<comment type="PTM">
    <text evidence="1">Methylated by PrmC. Methylation increases the termination efficiency of RF1.</text>
</comment>
<comment type="similarity">
    <text evidence="1">Belongs to the prokaryotic/mitochondrial release factor family.</text>
</comment>
<feature type="chain" id="PRO_0000263331" description="Peptide chain release factor 1">
    <location>
        <begin position="1"/>
        <end position="351"/>
    </location>
</feature>
<feature type="modified residue" description="N5-methylglutamine" evidence="1">
    <location>
        <position position="229"/>
    </location>
</feature>
<reference key="1">
    <citation type="submission" date="2005-09" db="EMBL/GenBank/DDBJ databases">
        <title>Complete sequence of chromosome 1 of Rhodobacter sphaeroides 2.4.1.</title>
        <authorList>
            <person name="Copeland A."/>
            <person name="Lucas S."/>
            <person name="Lapidus A."/>
            <person name="Barry K."/>
            <person name="Detter J.C."/>
            <person name="Glavina T."/>
            <person name="Hammon N."/>
            <person name="Israni S."/>
            <person name="Pitluck S."/>
            <person name="Richardson P."/>
            <person name="Mackenzie C."/>
            <person name="Choudhary M."/>
            <person name="Larimer F."/>
            <person name="Hauser L.J."/>
            <person name="Land M."/>
            <person name="Donohue T.J."/>
            <person name="Kaplan S."/>
        </authorList>
    </citation>
    <scope>NUCLEOTIDE SEQUENCE [LARGE SCALE GENOMIC DNA]</scope>
    <source>
        <strain>ATCC 17023 / DSM 158 / JCM 6121 / CCUG 31486 / LMG 2827 / NBRC 12203 / NCIMB 8253 / ATH 2.4.1.</strain>
    </source>
</reference>
<organism>
    <name type="scientific">Cereibacter sphaeroides (strain ATCC 17023 / DSM 158 / JCM 6121 / CCUG 31486 / LMG 2827 / NBRC 12203 / NCIMB 8253 / ATH 2.4.1.)</name>
    <name type="common">Rhodobacter sphaeroides</name>
    <dbReference type="NCBI Taxonomy" id="272943"/>
    <lineage>
        <taxon>Bacteria</taxon>
        <taxon>Pseudomonadati</taxon>
        <taxon>Pseudomonadota</taxon>
        <taxon>Alphaproteobacteria</taxon>
        <taxon>Rhodobacterales</taxon>
        <taxon>Paracoccaceae</taxon>
        <taxon>Cereibacter</taxon>
    </lineage>
</organism>
<keyword id="KW-0963">Cytoplasm</keyword>
<keyword id="KW-0488">Methylation</keyword>
<keyword id="KW-0648">Protein biosynthesis</keyword>
<keyword id="KW-1185">Reference proteome</keyword>
<evidence type="ECO:0000255" key="1">
    <source>
        <dbReference type="HAMAP-Rule" id="MF_00093"/>
    </source>
</evidence>
<dbReference type="EMBL" id="CP000143">
    <property type="protein sequence ID" value="ABA79068.1"/>
    <property type="molecule type" value="Genomic_DNA"/>
</dbReference>
<dbReference type="RefSeq" id="WP_011337837.1">
    <property type="nucleotide sequence ID" value="NC_007493.2"/>
</dbReference>
<dbReference type="RefSeq" id="YP_352969.1">
    <property type="nucleotide sequence ID" value="NC_007493.2"/>
</dbReference>
<dbReference type="SMR" id="Q3J2B6"/>
<dbReference type="STRING" id="272943.RSP_2907"/>
<dbReference type="EnsemblBacteria" id="ABA79068">
    <property type="protein sequence ID" value="ABA79068"/>
    <property type="gene ID" value="RSP_2907"/>
</dbReference>
<dbReference type="GeneID" id="3720647"/>
<dbReference type="KEGG" id="rsp:RSP_2907"/>
<dbReference type="PATRIC" id="fig|272943.9.peg.1844"/>
<dbReference type="eggNOG" id="COG0216">
    <property type="taxonomic scope" value="Bacteria"/>
</dbReference>
<dbReference type="OrthoDB" id="9806673at2"/>
<dbReference type="PhylomeDB" id="Q3J2B6"/>
<dbReference type="Proteomes" id="UP000002703">
    <property type="component" value="Chromosome 1"/>
</dbReference>
<dbReference type="GO" id="GO:0005737">
    <property type="term" value="C:cytoplasm"/>
    <property type="evidence" value="ECO:0007669"/>
    <property type="project" value="UniProtKB-SubCell"/>
</dbReference>
<dbReference type="GO" id="GO:0016149">
    <property type="term" value="F:translation release factor activity, codon specific"/>
    <property type="evidence" value="ECO:0007669"/>
    <property type="project" value="UniProtKB-UniRule"/>
</dbReference>
<dbReference type="FunFam" id="3.30.160.20:FF:000004">
    <property type="entry name" value="Peptide chain release factor 1"/>
    <property type="match status" value="1"/>
</dbReference>
<dbReference type="FunFam" id="3.30.70.1660:FF:000002">
    <property type="entry name" value="Peptide chain release factor 1"/>
    <property type="match status" value="1"/>
</dbReference>
<dbReference type="FunFam" id="3.30.70.1660:FF:000004">
    <property type="entry name" value="Peptide chain release factor 1"/>
    <property type="match status" value="1"/>
</dbReference>
<dbReference type="Gene3D" id="3.30.160.20">
    <property type="match status" value="1"/>
</dbReference>
<dbReference type="Gene3D" id="3.30.70.1660">
    <property type="match status" value="1"/>
</dbReference>
<dbReference type="Gene3D" id="6.10.140.1950">
    <property type="match status" value="1"/>
</dbReference>
<dbReference type="HAMAP" id="MF_00093">
    <property type="entry name" value="Rel_fac_1"/>
    <property type="match status" value="1"/>
</dbReference>
<dbReference type="InterPro" id="IPR005139">
    <property type="entry name" value="PCRF"/>
</dbReference>
<dbReference type="InterPro" id="IPR000352">
    <property type="entry name" value="Pep_chain_release_fac_I"/>
</dbReference>
<dbReference type="InterPro" id="IPR045853">
    <property type="entry name" value="Pep_chain_release_fac_I_sf"/>
</dbReference>
<dbReference type="InterPro" id="IPR050057">
    <property type="entry name" value="Prokaryotic/Mito_RF"/>
</dbReference>
<dbReference type="InterPro" id="IPR004373">
    <property type="entry name" value="RF-1"/>
</dbReference>
<dbReference type="NCBIfam" id="TIGR00019">
    <property type="entry name" value="prfA"/>
    <property type="match status" value="1"/>
</dbReference>
<dbReference type="NCBIfam" id="NF001859">
    <property type="entry name" value="PRK00591.1"/>
    <property type="match status" value="1"/>
</dbReference>
<dbReference type="PANTHER" id="PTHR43804">
    <property type="entry name" value="LD18447P"/>
    <property type="match status" value="1"/>
</dbReference>
<dbReference type="PANTHER" id="PTHR43804:SF7">
    <property type="entry name" value="LD18447P"/>
    <property type="match status" value="1"/>
</dbReference>
<dbReference type="Pfam" id="PF03462">
    <property type="entry name" value="PCRF"/>
    <property type="match status" value="1"/>
</dbReference>
<dbReference type="Pfam" id="PF00472">
    <property type="entry name" value="RF-1"/>
    <property type="match status" value="1"/>
</dbReference>
<dbReference type="SMART" id="SM00937">
    <property type="entry name" value="PCRF"/>
    <property type="match status" value="1"/>
</dbReference>
<dbReference type="SUPFAM" id="SSF75620">
    <property type="entry name" value="Release factor"/>
    <property type="match status" value="1"/>
</dbReference>
<dbReference type="PROSITE" id="PS00745">
    <property type="entry name" value="RF_PROK_I"/>
    <property type="match status" value="1"/>
</dbReference>
<protein>
    <recommendedName>
        <fullName evidence="1">Peptide chain release factor 1</fullName>
        <shortName evidence="1">RF-1</shortName>
    </recommendedName>
</protein>
<accession>Q3J2B6</accession>
<proteinExistence type="inferred from homology"/>
<gene>
    <name evidence="1" type="primary">prfA</name>
    <name type="ordered locus">RHOS4_15000</name>
    <name type="ORF">RSP_2907</name>
</gene>
<name>RF1_CERS4</name>